<feature type="chain" id="PRO_0000061669" description="Cytochrome b">
    <location>
        <begin position="1"/>
        <end position="379"/>
    </location>
</feature>
<feature type="transmembrane region" description="Helical" evidence="2">
    <location>
        <begin position="34"/>
        <end position="54"/>
    </location>
</feature>
<feature type="transmembrane region" description="Helical" evidence="2">
    <location>
        <begin position="78"/>
        <end position="99"/>
    </location>
</feature>
<feature type="transmembrane region" description="Helical" evidence="2">
    <location>
        <begin position="114"/>
        <end position="134"/>
    </location>
</feature>
<feature type="transmembrane region" description="Helical" evidence="2">
    <location>
        <begin position="179"/>
        <end position="199"/>
    </location>
</feature>
<feature type="transmembrane region" description="Helical" evidence="2">
    <location>
        <begin position="227"/>
        <end position="247"/>
    </location>
</feature>
<feature type="transmembrane region" description="Helical" evidence="2">
    <location>
        <begin position="289"/>
        <end position="309"/>
    </location>
</feature>
<feature type="transmembrane region" description="Helical" evidence="2">
    <location>
        <begin position="321"/>
        <end position="341"/>
    </location>
</feature>
<feature type="transmembrane region" description="Helical" evidence="2">
    <location>
        <begin position="348"/>
        <end position="368"/>
    </location>
</feature>
<feature type="binding site" description="axial binding residue" evidence="2">
    <location>
        <position position="84"/>
    </location>
    <ligand>
        <name>heme b</name>
        <dbReference type="ChEBI" id="CHEBI:60344"/>
        <label>b562</label>
    </ligand>
    <ligandPart>
        <name>Fe</name>
        <dbReference type="ChEBI" id="CHEBI:18248"/>
    </ligandPart>
</feature>
<feature type="binding site" description="axial binding residue" evidence="2">
    <location>
        <position position="98"/>
    </location>
    <ligand>
        <name>heme b</name>
        <dbReference type="ChEBI" id="CHEBI:60344"/>
        <label>b566</label>
    </ligand>
    <ligandPart>
        <name>Fe</name>
        <dbReference type="ChEBI" id="CHEBI:18248"/>
    </ligandPart>
</feature>
<feature type="binding site" description="axial binding residue" evidence="2">
    <location>
        <position position="183"/>
    </location>
    <ligand>
        <name>heme b</name>
        <dbReference type="ChEBI" id="CHEBI:60344"/>
        <label>b562</label>
    </ligand>
    <ligandPart>
        <name>Fe</name>
        <dbReference type="ChEBI" id="CHEBI:18248"/>
    </ligandPart>
</feature>
<feature type="binding site" description="axial binding residue" evidence="2">
    <location>
        <position position="197"/>
    </location>
    <ligand>
        <name>heme b</name>
        <dbReference type="ChEBI" id="CHEBI:60344"/>
        <label>b566</label>
    </ligand>
    <ligandPart>
        <name>Fe</name>
        <dbReference type="ChEBI" id="CHEBI:18248"/>
    </ligandPart>
</feature>
<feature type="binding site" evidence="2">
    <location>
        <position position="202"/>
    </location>
    <ligand>
        <name>a ubiquinone</name>
        <dbReference type="ChEBI" id="CHEBI:16389"/>
    </ligand>
</feature>
<protein>
    <recommendedName>
        <fullName>Cytochrome b</fullName>
    </recommendedName>
    <alternativeName>
        <fullName>Complex III subunit 3</fullName>
    </alternativeName>
    <alternativeName>
        <fullName>Complex III subunit III</fullName>
    </alternativeName>
    <alternativeName>
        <fullName>Cytochrome b-c1 complex subunit 3</fullName>
    </alternativeName>
    <alternativeName>
        <fullName>Ubiquinol-cytochrome-c reductase complex cytochrome b subunit</fullName>
    </alternativeName>
</protein>
<organism>
    <name type="scientific">Tinamus major</name>
    <name type="common">Great tinamou</name>
    <name type="synonym">Tetrao major</name>
    <dbReference type="NCBI Taxonomy" id="30468"/>
    <lineage>
        <taxon>Eukaryota</taxon>
        <taxon>Metazoa</taxon>
        <taxon>Chordata</taxon>
        <taxon>Craniata</taxon>
        <taxon>Vertebrata</taxon>
        <taxon>Euteleostomi</taxon>
        <taxon>Archelosauria</taxon>
        <taxon>Archosauria</taxon>
        <taxon>Dinosauria</taxon>
        <taxon>Saurischia</taxon>
        <taxon>Theropoda</taxon>
        <taxon>Coelurosauria</taxon>
        <taxon>Aves</taxon>
        <taxon>Palaeognathae</taxon>
        <taxon>Tinamiformes</taxon>
        <taxon>Tinamidae</taxon>
        <taxon>Tinamus</taxon>
    </lineage>
</organism>
<gene>
    <name type="primary">MT-CYB</name>
    <name type="synonym">COB</name>
    <name type="synonym">CYTB</name>
    <name type="synonym">MTCYB</name>
</gene>
<reference key="1">
    <citation type="book" date="1997" name="Avian molecular evolution and systematics">
        <title>Phylogenetic relationships of the ratite birds: resolving conflicts between molecular and morphological data sets.</title>
        <editorList>
            <person name="Mindell D.P."/>
        </editorList>
        <authorList>
            <person name="Lee K."/>
            <person name="Feinstein J."/>
            <person name="Cracraft J."/>
        </authorList>
    </citation>
    <scope>NUCLEOTIDE SEQUENCE [GENOMIC DNA]</scope>
</reference>
<evidence type="ECO:0000250" key="1"/>
<evidence type="ECO:0000250" key="2">
    <source>
        <dbReference type="UniProtKB" id="P00157"/>
    </source>
</evidence>
<evidence type="ECO:0000255" key="3">
    <source>
        <dbReference type="PROSITE-ProRule" id="PRU00967"/>
    </source>
</evidence>
<evidence type="ECO:0000255" key="4">
    <source>
        <dbReference type="PROSITE-ProRule" id="PRU00968"/>
    </source>
</evidence>
<comment type="function">
    <text evidence="2">Component of the ubiquinol-cytochrome c reductase complex (complex III or cytochrome b-c1 complex) that is part of the mitochondrial respiratory chain. The b-c1 complex mediates electron transfer from ubiquinol to cytochrome c. Contributes to the generation of a proton gradient across the mitochondrial membrane that is then used for ATP synthesis.</text>
</comment>
<comment type="cofactor">
    <cofactor evidence="2">
        <name>heme b</name>
        <dbReference type="ChEBI" id="CHEBI:60344"/>
    </cofactor>
    <text evidence="2">Binds 2 heme b groups non-covalently.</text>
</comment>
<comment type="subunit">
    <text evidence="2">The cytochrome bc1 complex contains 11 subunits: 3 respiratory subunits (MT-CYB, CYC1 and UQCRFS1), 2 core proteins (UQCRC1 and UQCRC2) and 6 low-molecular weight proteins (UQCRH/QCR6, UQCRB/QCR7, UQCRQ/QCR8, UQCR10/QCR9, UQCR11/QCR10 and a cleavage product of UQCRFS1). This cytochrome bc1 complex then forms a dimer.</text>
</comment>
<comment type="subcellular location">
    <subcellularLocation>
        <location evidence="2">Mitochondrion inner membrane</location>
        <topology evidence="2">Multi-pass membrane protein</topology>
    </subcellularLocation>
</comment>
<comment type="miscellaneous">
    <text evidence="1">Heme 1 (or BL or b562) is low-potential and absorbs at about 562 nm, and heme 2 (or BH or b566) is high-potential and absorbs at about 566 nm.</text>
</comment>
<comment type="similarity">
    <text evidence="3 4">Belongs to the cytochrome b family.</text>
</comment>
<comment type="caution">
    <text evidence="2">The full-length protein contains only eight transmembrane helices, not nine as predicted by bioinformatics tools.</text>
</comment>
<name>CYB_TINMA</name>
<accession>O03553</accession>
<proteinExistence type="inferred from homology"/>
<dbReference type="EMBL" id="U76056">
    <property type="protein sequence ID" value="AAB61330.1"/>
    <property type="molecule type" value="Genomic_DNA"/>
</dbReference>
<dbReference type="SMR" id="O03553"/>
<dbReference type="GO" id="GO:0005743">
    <property type="term" value="C:mitochondrial inner membrane"/>
    <property type="evidence" value="ECO:0007669"/>
    <property type="project" value="UniProtKB-SubCell"/>
</dbReference>
<dbReference type="GO" id="GO:0045275">
    <property type="term" value="C:respiratory chain complex III"/>
    <property type="evidence" value="ECO:0007669"/>
    <property type="project" value="InterPro"/>
</dbReference>
<dbReference type="GO" id="GO:0046872">
    <property type="term" value="F:metal ion binding"/>
    <property type="evidence" value="ECO:0007669"/>
    <property type="project" value="UniProtKB-KW"/>
</dbReference>
<dbReference type="GO" id="GO:0008121">
    <property type="term" value="F:ubiquinol-cytochrome-c reductase activity"/>
    <property type="evidence" value="ECO:0007669"/>
    <property type="project" value="InterPro"/>
</dbReference>
<dbReference type="GO" id="GO:0006122">
    <property type="term" value="P:mitochondrial electron transport, ubiquinol to cytochrome c"/>
    <property type="evidence" value="ECO:0007669"/>
    <property type="project" value="TreeGrafter"/>
</dbReference>
<dbReference type="CDD" id="cd00290">
    <property type="entry name" value="cytochrome_b_C"/>
    <property type="match status" value="1"/>
</dbReference>
<dbReference type="CDD" id="cd00284">
    <property type="entry name" value="Cytochrome_b_N"/>
    <property type="match status" value="1"/>
</dbReference>
<dbReference type="FunFam" id="1.20.810.10:FF:000002">
    <property type="entry name" value="Cytochrome b"/>
    <property type="match status" value="1"/>
</dbReference>
<dbReference type="Gene3D" id="1.20.810.10">
    <property type="entry name" value="Cytochrome Bc1 Complex, Chain C"/>
    <property type="match status" value="1"/>
</dbReference>
<dbReference type="InterPro" id="IPR005798">
    <property type="entry name" value="Cyt_b/b6_C"/>
</dbReference>
<dbReference type="InterPro" id="IPR036150">
    <property type="entry name" value="Cyt_b/b6_C_sf"/>
</dbReference>
<dbReference type="InterPro" id="IPR005797">
    <property type="entry name" value="Cyt_b/b6_N"/>
</dbReference>
<dbReference type="InterPro" id="IPR027387">
    <property type="entry name" value="Cytb/b6-like_sf"/>
</dbReference>
<dbReference type="InterPro" id="IPR030689">
    <property type="entry name" value="Cytochrome_b"/>
</dbReference>
<dbReference type="InterPro" id="IPR048260">
    <property type="entry name" value="Cytochrome_b_C_euk/bac"/>
</dbReference>
<dbReference type="InterPro" id="IPR048259">
    <property type="entry name" value="Cytochrome_b_N_euk/bac"/>
</dbReference>
<dbReference type="InterPro" id="IPR016174">
    <property type="entry name" value="Di-haem_cyt_TM"/>
</dbReference>
<dbReference type="PANTHER" id="PTHR19271">
    <property type="entry name" value="CYTOCHROME B"/>
    <property type="match status" value="1"/>
</dbReference>
<dbReference type="PANTHER" id="PTHR19271:SF16">
    <property type="entry name" value="CYTOCHROME B"/>
    <property type="match status" value="1"/>
</dbReference>
<dbReference type="Pfam" id="PF00032">
    <property type="entry name" value="Cytochrom_B_C"/>
    <property type="match status" value="1"/>
</dbReference>
<dbReference type="Pfam" id="PF00033">
    <property type="entry name" value="Cytochrome_B"/>
    <property type="match status" value="1"/>
</dbReference>
<dbReference type="PIRSF" id="PIRSF038885">
    <property type="entry name" value="COB"/>
    <property type="match status" value="1"/>
</dbReference>
<dbReference type="SUPFAM" id="SSF81648">
    <property type="entry name" value="a domain/subunit of cytochrome bc1 complex (Ubiquinol-cytochrome c reductase)"/>
    <property type="match status" value="1"/>
</dbReference>
<dbReference type="SUPFAM" id="SSF81342">
    <property type="entry name" value="Transmembrane di-heme cytochromes"/>
    <property type="match status" value="1"/>
</dbReference>
<dbReference type="PROSITE" id="PS51003">
    <property type="entry name" value="CYTB_CTER"/>
    <property type="match status" value="1"/>
</dbReference>
<dbReference type="PROSITE" id="PS51002">
    <property type="entry name" value="CYTB_NTER"/>
    <property type="match status" value="1"/>
</dbReference>
<geneLocation type="mitochondrion"/>
<keyword id="KW-0249">Electron transport</keyword>
<keyword id="KW-0349">Heme</keyword>
<keyword id="KW-0408">Iron</keyword>
<keyword id="KW-0472">Membrane</keyword>
<keyword id="KW-0479">Metal-binding</keyword>
<keyword id="KW-0496">Mitochondrion</keyword>
<keyword id="KW-0999">Mitochondrion inner membrane</keyword>
<keyword id="KW-0679">Respiratory chain</keyword>
<keyword id="KW-0812">Transmembrane</keyword>
<keyword id="KW-1133">Transmembrane helix</keyword>
<keyword id="KW-0813">Transport</keyword>
<keyword id="KW-0830">Ubiquinone</keyword>
<sequence length="379" mass="42798">MAPNIRKSHPLLKMINNSLIDLPSPSNISAWWNFGSLLGICLITQILTGLLLATHYTADTHLAFSSVSHICRDVQYGWLIRNLHANGASFFFICIYLHIGRGLYYGSYLYKETWNIGIILLLTLMATAFVGYVLPWGQMSFWGATVITNLLSAIPYIGQALVEWAWGGFSVDNPTLTRFFALHFLLPFLIVSLSIIHLTFLHESGSNNPLGIISQSDKIPFHPYFTTKDMLGFTLMFFPLLTLAFFFPNFLGDPENFTPANPLITPPHIKPEWYFLFAYAILRSIPNKLGGVLALTASVLILFLSPLLHASKMRSLTFRPMSQLLFWLLIANLLILTWIGSQPVEDPFIIIGQVASFTYFFTLLFLFPITATLENKILY</sequence>